<geneLocation type="chloroplast"/>
<organism>
    <name type="scientific">Picea glauca</name>
    <name type="common">White spruce</name>
    <name type="synonym">Pinus glauca</name>
    <dbReference type="NCBI Taxonomy" id="3330"/>
    <lineage>
        <taxon>Eukaryota</taxon>
        <taxon>Viridiplantae</taxon>
        <taxon>Streptophyta</taxon>
        <taxon>Embryophyta</taxon>
        <taxon>Tracheophyta</taxon>
        <taxon>Spermatophyta</taxon>
        <taxon>Pinopsida</taxon>
        <taxon>Pinidae</taxon>
        <taxon>Conifers I</taxon>
        <taxon>Pinales</taxon>
        <taxon>Pinaceae</taxon>
        <taxon>Picea</taxon>
    </lineage>
</organism>
<gene>
    <name evidence="1" type="primary">matK</name>
    <name type="synonym">ycf14</name>
</gene>
<keyword id="KW-0150">Chloroplast</keyword>
<keyword id="KW-0507">mRNA processing</keyword>
<keyword id="KW-0934">Plastid</keyword>
<keyword id="KW-0694">RNA-binding</keyword>
<keyword id="KW-0819">tRNA processing</keyword>
<proteinExistence type="inferred from homology"/>
<dbReference type="EMBL" id="AF133923">
    <property type="protein sequence ID" value="AAD21649.1"/>
    <property type="molecule type" value="Genomic_DNA"/>
</dbReference>
<dbReference type="EMBL" id="AF133924">
    <property type="protein sequence ID" value="AAD21650.1"/>
    <property type="molecule type" value="Genomic_DNA"/>
</dbReference>
<dbReference type="EMBL" id="AF133925">
    <property type="protein sequence ID" value="AAD21651.1"/>
    <property type="molecule type" value="Genomic_DNA"/>
</dbReference>
<dbReference type="EMBL" id="AF133926">
    <property type="protein sequence ID" value="AAD21652.1"/>
    <property type="molecule type" value="Genomic_DNA"/>
</dbReference>
<dbReference type="PIR" id="T08156">
    <property type="entry name" value="T08156"/>
</dbReference>
<dbReference type="RefSeq" id="YP_009185689.1">
    <property type="nucleotide sequence ID" value="NC_028594.1"/>
</dbReference>
<dbReference type="GeneID" id="26373541"/>
<dbReference type="GO" id="GO:0009507">
    <property type="term" value="C:chloroplast"/>
    <property type="evidence" value="ECO:0007669"/>
    <property type="project" value="UniProtKB-SubCell"/>
</dbReference>
<dbReference type="GO" id="GO:0003723">
    <property type="term" value="F:RNA binding"/>
    <property type="evidence" value="ECO:0007669"/>
    <property type="project" value="UniProtKB-KW"/>
</dbReference>
<dbReference type="GO" id="GO:0006397">
    <property type="term" value="P:mRNA processing"/>
    <property type="evidence" value="ECO:0007669"/>
    <property type="project" value="UniProtKB-KW"/>
</dbReference>
<dbReference type="GO" id="GO:0008380">
    <property type="term" value="P:RNA splicing"/>
    <property type="evidence" value="ECO:0007669"/>
    <property type="project" value="UniProtKB-UniRule"/>
</dbReference>
<dbReference type="GO" id="GO:0008033">
    <property type="term" value="P:tRNA processing"/>
    <property type="evidence" value="ECO:0007669"/>
    <property type="project" value="UniProtKB-KW"/>
</dbReference>
<dbReference type="HAMAP" id="MF_01390">
    <property type="entry name" value="MatK"/>
    <property type="match status" value="1"/>
</dbReference>
<dbReference type="InterPro" id="IPR024937">
    <property type="entry name" value="Domain_X"/>
</dbReference>
<dbReference type="InterPro" id="IPR002866">
    <property type="entry name" value="Maturase_MatK"/>
</dbReference>
<dbReference type="InterPro" id="IPR024942">
    <property type="entry name" value="Maturase_MatK_N"/>
</dbReference>
<dbReference type="PANTHER" id="PTHR34811">
    <property type="entry name" value="MATURASE K"/>
    <property type="match status" value="1"/>
</dbReference>
<dbReference type="PANTHER" id="PTHR34811:SF1">
    <property type="entry name" value="MATURASE K"/>
    <property type="match status" value="1"/>
</dbReference>
<dbReference type="Pfam" id="PF01348">
    <property type="entry name" value="Intron_maturas2"/>
    <property type="match status" value="1"/>
</dbReference>
<dbReference type="Pfam" id="PF01824">
    <property type="entry name" value="MatK_N"/>
    <property type="match status" value="1"/>
</dbReference>
<accession>O63070</accession>
<reference key="1">
    <citation type="submission" date="1998-04" db="EMBL/GenBank/DDBJ databases">
        <title>Distribution of sequence variation in the chloroplast trnK intron and rpl33-psaJ-trnP intergenic spacers within and between Picea rubens, Picea mariana and Picea glauca: potential molecular markers for species-specific identification.</title>
        <authorList>
            <person name="Germano J."/>
            <person name="Klein A.S."/>
        </authorList>
    </citation>
    <scope>NUCLEOTIDE SEQUENCE [GENOMIC DNA]</scope>
</reference>
<reference key="2">
    <citation type="journal article" date="1999" name="Theor. Appl. Genet.">
        <title>Species-specific nuclear and chloroplast single nucleotide polymorphisms to distinguish Picea glauca, P. mariana and P. rubens.</title>
        <authorList>
            <person name="Germano J."/>
            <person name="Klein A.S."/>
        </authorList>
        <dbReference type="AGRICOLA" id="IND22025547"/>
    </citation>
    <scope>NUCLEOTIDE SEQUENCE [GENOMIC DNA]</scope>
</reference>
<protein>
    <recommendedName>
        <fullName evidence="1">Maturase K</fullName>
    </recommendedName>
    <alternativeName>
        <fullName evidence="1">Intron maturase</fullName>
    </alternativeName>
</protein>
<name>MATK_PICGL</name>
<comment type="function">
    <text evidence="1">Usually encoded in the trnK tRNA gene intron. Probably assists in splicing its own and other chloroplast group II introns.</text>
</comment>
<comment type="subcellular location">
    <subcellularLocation>
        <location>Plastid</location>
        <location>Chloroplast</location>
    </subcellularLocation>
</comment>
<comment type="similarity">
    <text evidence="1">Belongs to the intron maturase 2 family. MatK subfamily.</text>
</comment>
<sequence length="515" mass="60917">MDEFHRYGKEDSSWQQCFLYPLFFQEDLYAISHDHYLDGSSSSEPMEHLSSNDQFSFLTVKRLIGQIRQQNHSIVLFVNCDPNPLVDRKKSSYSESVLEGLTLVLEVPFSIRSKYSVEGMNEWKSFRSIHSIFPFLEDKFPHSNYVSDTRIPYSIHPEILVRTFRRWIGDAPSLHPLRSILYEYRNSSESLQRSIIVVPKVNTRFFLFLWNNYVYECESILVSLLKRSSHSRSLSHGSFPQRTHFHRKIKNIFLFSRRNSFQSIWSLKDPNIHYVRYGERSIIAIKGTNLLVKKYRYYLPIFRQCYFHLWNEPYRVCSHQLSKNCSSSLGYFLRFRMKPLLVKTKMLDELFIADLITDEFDPIVPIVPIIGLLSREKFCDISGRPISKLSWTSLTDDDILDRFDRIWRNLFHYYSGSFGRDGLYRIKYILSLSCAKTLACKHKSTIRVVRKELGPELFKKSFSKERELDSPPFSSKAAARSQRERIWHSDIPQINPLAHSWQKIQDLKIENLFDQ</sequence>
<evidence type="ECO:0000255" key="1">
    <source>
        <dbReference type="HAMAP-Rule" id="MF_01390"/>
    </source>
</evidence>
<feature type="chain" id="PRO_0000143596" description="Maturase K">
    <location>
        <begin position="1"/>
        <end position="515"/>
    </location>
</feature>